<dbReference type="EC" id="2.7.11.-"/>
<dbReference type="EMBL" id="AL050399">
    <property type="protein sequence ID" value="CAB82154.1"/>
    <property type="molecule type" value="Genomic_DNA"/>
</dbReference>
<dbReference type="EMBL" id="AL161532">
    <property type="protein sequence ID" value="CAB78192.1"/>
    <property type="molecule type" value="Genomic_DNA"/>
</dbReference>
<dbReference type="EMBL" id="CP002687">
    <property type="protein sequence ID" value="AEE83018.1"/>
    <property type="molecule type" value="Genomic_DNA"/>
</dbReference>
<dbReference type="PIR" id="T10569">
    <property type="entry name" value="T10569"/>
</dbReference>
<dbReference type="RefSeq" id="NP_192888.1">
    <property type="nucleotide sequence ID" value="NM_117220.1"/>
</dbReference>
<dbReference type="SMR" id="Q9LDN1"/>
<dbReference type="BioGRID" id="12053">
    <property type="interactions" value="20"/>
</dbReference>
<dbReference type="IntAct" id="Q9LDN1">
    <property type="interactions" value="20"/>
</dbReference>
<dbReference type="STRING" id="3702.Q9LDN1"/>
<dbReference type="GlyCosmos" id="Q9LDN1">
    <property type="glycosylation" value="10 sites, No reported glycans"/>
</dbReference>
<dbReference type="GlyGen" id="Q9LDN1">
    <property type="glycosylation" value="10 sites"/>
</dbReference>
<dbReference type="PaxDb" id="3702-AT4G11490.1"/>
<dbReference type="EnsemblPlants" id="AT4G11490.1">
    <property type="protein sequence ID" value="AT4G11490.1"/>
    <property type="gene ID" value="AT4G11490"/>
</dbReference>
<dbReference type="GeneID" id="826754"/>
<dbReference type="Gramene" id="AT4G11490.1">
    <property type="protein sequence ID" value="AT4G11490.1"/>
    <property type="gene ID" value="AT4G11490"/>
</dbReference>
<dbReference type="KEGG" id="ath:AT4G11490"/>
<dbReference type="Araport" id="AT4G11490"/>
<dbReference type="TAIR" id="AT4G11490">
    <property type="gene designation" value="CRK33"/>
</dbReference>
<dbReference type="HOGENOM" id="CLU_000288_35_7_1"/>
<dbReference type="InParanoid" id="Q9LDN1"/>
<dbReference type="OMA" id="TEAYTWT"/>
<dbReference type="PhylomeDB" id="Q9LDN1"/>
<dbReference type="PRO" id="PR:Q9LDN1"/>
<dbReference type="Proteomes" id="UP000006548">
    <property type="component" value="Chromosome 4"/>
</dbReference>
<dbReference type="ExpressionAtlas" id="Q9LDN1">
    <property type="expression patterns" value="baseline and differential"/>
</dbReference>
<dbReference type="GO" id="GO:0016020">
    <property type="term" value="C:membrane"/>
    <property type="evidence" value="ECO:0007669"/>
    <property type="project" value="UniProtKB-SubCell"/>
</dbReference>
<dbReference type="GO" id="GO:0005524">
    <property type="term" value="F:ATP binding"/>
    <property type="evidence" value="ECO:0007669"/>
    <property type="project" value="UniProtKB-KW"/>
</dbReference>
<dbReference type="GO" id="GO:0106310">
    <property type="term" value="F:protein serine kinase activity"/>
    <property type="evidence" value="ECO:0007669"/>
    <property type="project" value="RHEA"/>
</dbReference>
<dbReference type="GO" id="GO:0004674">
    <property type="term" value="F:protein serine/threonine kinase activity"/>
    <property type="evidence" value="ECO:0007669"/>
    <property type="project" value="UniProtKB-KW"/>
</dbReference>
<dbReference type="CDD" id="cd23509">
    <property type="entry name" value="Gnk2-like"/>
    <property type="match status" value="2"/>
</dbReference>
<dbReference type="CDD" id="cd14066">
    <property type="entry name" value="STKc_IRAK"/>
    <property type="match status" value="1"/>
</dbReference>
<dbReference type="FunFam" id="1.10.510.10:FF:000129">
    <property type="entry name" value="cysteine-rich receptor-like protein kinase 10"/>
    <property type="match status" value="1"/>
</dbReference>
<dbReference type="FunFam" id="3.30.430.20:FF:000007">
    <property type="entry name" value="Cysteine-rich receptor-like protein kinase 11"/>
    <property type="match status" value="1"/>
</dbReference>
<dbReference type="FunFam" id="3.30.430.20:FF:000003">
    <property type="entry name" value="Cysteine-rich RLK (RECEPTOR-like protein kinase) 10"/>
    <property type="match status" value="1"/>
</dbReference>
<dbReference type="FunFam" id="3.30.200.20:FF:000727">
    <property type="entry name" value="Cysteine-rich RLK (RECEPTOR-like protein kinase) 23"/>
    <property type="match status" value="1"/>
</dbReference>
<dbReference type="Gene3D" id="3.30.430.20">
    <property type="entry name" value="Gnk2 domain, C-X8-C-X2-C motif"/>
    <property type="match status" value="2"/>
</dbReference>
<dbReference type="Gene3D" id="3.30.200.20">
    <property type="entry name" value="Phosphorylase Kinase, domain 1"/>
    <property type="match status" value="1"/>
</dbReference>
<dbReference type="Gene3D" id="1.10.510.10">
    <property type="entry name" value="Transferase(Phosphotransferase) domain 1"/>
    <property type="match status" value="1"/>
</dbReference>
<dbReference type="InterPro" id="IPR002902">
    <property type="entry name" value="GNK2"/>
</dbReference>
<dbReference type="InterPro" id="IPR038408">
    <property type="entry name" value="GNK2_sf"/>
</dbReference>
<dbReference type="InterPro" id="IPR011009">
    <property type="entry name" value="Kinase-like_dom_sf"/>
</dbReference>
<dbReference type="InterPro" id="IPR000719">
    <property type="entry name" value="Prot_kinase_dom"/>
</dbReference>
<dbReference type="InterPro" id="IPR017441">
    <property type="entry name" value="Protein_kinase_ATP_BS"/>
</dbReference>
<dbReference type="InterPro" id="IPR001245">
    <property type="entry name" value="Ser-Thr/Tyr_kinase_cat_dom"/>
</dbReference>
<dbReference type="InterPro" id="IPR008271">
    <property type="entry name" value="Ser/Thr_kinase_AS"/>
</dbReference>
<dbReference type="PANTHER" id="PTHR27002:SF810">
    <property type="entry name" value="CYSTEINE-RICH RECEPTOR-LIKE PROTEIN KINASE 33-RELATED"/>
    <property type="match status" value="1"/>
</dbReference>
<dbReference type="PANTHER" id="PTHR27002">
    <property type="entry name" value="RECEPTOR-LIKE SERINE/THREONINE-PROTEIN KINASE SD1-8"/>
    <property type="match status" value="1"/>
</dbReference>
<dbReference type="Pfam" id="PF07714">
    <property type="entry name" value="PK_Tyr_Ser-Thr"/>
    <property type="match status" value="1"/>
</dbReference>
<dbReference type="Pfam" id="PF01657">
    <property type="entry name" value="Stress-antifung"/>
    <property type="match status" value="2"/>
</dbReference>
<dbReference type="SMART" id="SM00220">
    <property type="entry name" value="S_TKc"/>
    <property type="match status" value="1"/>
</dbReference>
<dbReference type="SUPFAM" id="SSF56112">
    <property type="entry name" value="Protein kinase-like (PK-like)"/>
    <property type="match status" value="1"/>
</dbReference>
<dbReference type="PROSITE" id="PS51473">
    <property type="entry name" value="GNK2"/>
    <property type="match status" value="2"/>
</dbReference>
<dbReference type="PROSITE" id="PS00107">
    <property type="entry name" value="PROTEIN_KINASE_ATP"/>
    <property type="match status" value="1"/>
</dbReference>
<dbReference type="PROSITE" id="PS50011">
    <property type="entry name" value="PROTEIN_KINASE_DOM"/>
    <property type="match status" value="1"/>
</dbReference>
<dbReference type="PROSITE" id="PS00108">
    <property type="entry name" value="PROTEIN_KINASE_ST"/>
    <property type="match status" value="1"/>
</dbReference>
<sequence>MRKTKKISFLIFWVVLISIIGAISSQQCNETGYFEPWKTYDTNRRQILTSLASKVVDHYGFYNSSIGKVPDEVHVMGMCIDGTEPTVCSDCLKVAADQLQENCPNQTEAYTWTPHKTLCFARYSNSSFFKRVGLHPLYMEHSNVDIKSNLTYLNTIWEALTDRLMSDASSDYNASLSSRRYYAANVTNLTNFQNIYALMLCTPDLEKGACHNCLEKAVSEYGNLRMQRGIVAWPSCCFRWDLYPFIGAFNLTLSPPPGSKRNISVGFFVAIVVATGVVISVLSTLVVVLVCRKRKTDPPEESPKYSLQYDLKTIEAATCTFSKCNMLGQGGFGEVFKGVLQDGSEIAVKRLSKESAQGVQEFQNETSLVAKLQHRNLVGVLGFCMEGEEKILVYEFVPNKSLDQFLFEPTKKGQLDWAKRYKIIVGTARGILYLHHDSPLKIIHRDLKASNILLDAEMEPKVADFGMARIFRVDQSRADTRRVVGTHGYISPEYLMHGQFSVKSDVYSFGVLVLEIISGKRNSNFHETDESGKNLVTYAWRHWRNGSPLELVDSELEKNYQSNEVFRCIHIALLCVQNDPEQRPNLSTIIMMLTSNSITLPVPQSPVYEGMDMFLPSIKSLPGSVNDSLIDDLVPR</sequence>
<gene>
    <name type="primary">CRK33</name>
    <name type="ordered locus">At4g11490</name>
    <name type="ORF">F25E4.110</name>
</gene>
<feature type="signal peptide" evidence="2">
    <location>
        <begin position="1"/>
        <end position="25"/>
    </location>
</feature>
<feature type="chain" id="PRO_0000295080" description="Putative cysteine-rich receptor-like protein kinase 33">
    <location>
        <begin position="26"/>
        <end position="636"/>
    </location>
</feature>
<feature type="topological domain" description="Extracellular" evidence="2">
    <location>
        <begin position="26"/>
        <end position="266"/>
    </location>
</feature>
<feature type="transmembrane region" description="Helical" evidence="2">
    <location>
        <begin position="267"/>
        <end position="287"/>
    </location>
</feature>
<feature type="topological domain" description="Cytoplasmic" evidence="2">
    <location>
        <begin position="288"/>
        <end position="636"/>
    </location>
</feature>
<feature type="domain" description="Gnk2-homologous 1" evidence="4">
    <location>
        <begin position="26"/>
        <end position="128"/>
    </location>
</feature>
<feature type="domain" description="Gnk2-homologous 2" evidence="4">
    <location>
        <begin position="138"/>
        <end position="245"/>
    </location>
</feature>
<feature type="domain" description="Protein kinase" evidence="3">
    <location>
        <begin position="321"/>
        <end position="600"/>
    </location>
</feature>
<feature type="active site" description="Proton acceptor" evidence="3 5">
    <location>
        <position position="446"/>
    </location>
</feature>
<feature type="binding site" evidence="3">
    <location>
        <begin position="327"/>
        <end position="335"/>
    </location>
    <ligand>
        <name>ATP</name>
        <dbReference type="ChEBI" id="CHEBI:30616"/>
    </ligand>
</feature>
<feature type="binding site" evidence="3">
    <location>
        <position position="349"/>
    </location>
    <ligand>
        <name>ATP</name>
        <dbReference type="ChEBI" id="CHEBI:30616"/>
    </ligand>
</feature>
<feature type="modified residue" description="Phosphotyrosine" evidence="1">
    <location>
        <position position="394"/>
    </location>
</feature>
<feature type="modified residue" description="Phosphoserine" evidence="1">
    <location>
        <position position="450"/>
    </location>
</feature>
<feature type="modified residue" description="Phosphothreonine" evidence="1">
    <location>
        <position position="486"/>
    </location>
</feature>
<feature type="modified residue" description="Phosphotyrosine" evidence="1">
    <location>
        <position position="494"/>
    </location>
</feature>
<feature type="glycosylation site" description="N-linked (GlcNAc...) asparagine" evidence="2">
    <location>
        <position position="29"/>
    </location>
</feature>
<feature type="glycosylation site" description="N-linked (GlcNAc...) asparagine" evidence="2">
    <location>
        <position position="63"/>
    </location>
</feature>
<feature type="glycosylation site" description="N-linked (GlcNAc...) asparagine" evidence="2">
    <location>
        <position position="105"/>
    </location>
</feature>
<feature type="glycosylation site" description="N-linked (GlcNAc...) asparagine" evidence="2">
    <location>
        <position position="125"/>
    </location>
</feature>
<feature type="glycosylation site" description="N-linked (GlcNAc...) asparagine" evidence="2">
    <location>
        <position position="149"/>
    </location>
</feature>
<feature type="glycosylation site" description="N-linked (GlcNAc...) asparagine" evidence="2">
    <location>
        <position position="173"/>
    </location>
</feature>
<feature type="glycosylation site" description="N-linked (GlcNAc...) asparagine" evidence="2">
    <location>
        <position position="185"/>
    </location>
</feature>
<feature type="glycosylation site" description="N-linked (GlcNAc...) asparagine" evidence="2">
    <location>
        <position position="188"/>
    </location>
</feature>
<feature type="glycosylation site" description="N-linked (GlcNAc...) asparagine" evidence="2">
    <location>
        <position position="250"/>
    </location>
</feature>
<feature type="glycosylation site" description="N-linked (GlcNAc...) asparagine" evidence="2">
    <location>
        <position position="262"/>
    </location>
</feature>
<name>CRK33_ARATH</name>
<reference key="1">
    <citation type="journal article" date="1999" name="Nature">
        <title>Sequence and analysis of chromosome 4 of the plant Arabidopsis thaliana.</title>
        <authorList>
            <person name="Mayer K.F.X."/>
            <person name="Schueller C."/>
            <person name="Wambutt R."/>
            <person name="Murphy G."/>
            <person name="Volckaert G."/>
            <person name="Pohl T."/>
            <person name="Duesterhoeft A."/>
            <person name="Stiekema W."/>
            <person name="Entian K.-D."/>
            <person name="Terryn N."/>
            <person name="Harris B."/>
            <person name="Ansorge W."/>
            <person name="Brandt P."/>
            <person name="Grivell L.A."/>
            <person name="Rieger M."/>
            <person name="Weichselgartner M."/>
            <person name="de Simone V."/>
            <person name="Obermaier B."/>
            <person name="Mache R."/>
            <person name="Mueller M."/>
            <person name="Kreis M."/>
            <person name="Delseny M."/>
            <person name="Puigdomenech P."/>
            <person name="Watson M."/>
            <person name="Schmidtheini T."/>
            <person name="Reichert B."/>
            <person name="Portetelle D."/>
            <person name="Perez-Alonso M."/>
            <person name="Boutry M."/>
            <person name="Bancroft I."/>
            <person name="Vos P."/>
            <person name="Hoheisel J."/>
            <person name="Zimmermann W."/>
            <person name="Wedler H."/>
            <person name="Ridley P."/>
            <person name="Langham S.-A."/>
            <person name="McCullagh B."/>
            <person name="Bilham L."/>
            <person name="Robben J."/>
            <person name="van der Schueren J."/>
            <person name="Grymonprez B."/>
            <person name="Chuang Y.-J."/>
            <person name="Vandenbussche F."/>
            <person name="Braeken M."/>
            <person name="Weltjens I."/>
            <person name="Voet M."/>
            <person name="Bastiaens I."/>
            <person name="Aert R."/>
            <person name="Defoor E."/>
            <person name="Weitzenegger T."/>
            <person name="Bothe G."/>
            <person name="Ramsperger U."/>
            <person name="Hilbert H."/>
            <person name="Braun M."/>
            <person name="Holzer E."/>
            <person name="Brandt A."/>
            <person name="Peters S."/>
            <person name="van Staveren M."/>
            <person name="Dirkse W."/>
            <person name="Mooijman P."/>
            <person name="Klein Lankhorst R."/>
            <person name="Rose M."/>
            <person name="Hauf J."/>
            <person name="Koetter P."/>
            <person name="Berneiser S."/>
            <person name="Hempel S."/>
            <person name="Feldpausch M."/>
            <person name="Lamberth S."/>
            <person name="Van den Daele H."/>
            <person name="De Keyser A."/>
            <person name="Buysshaert C."/>
            <person name="Gielen J."/>
            <person name="Villarroel R."/>
            <person name="De Clercq R."/>
            <person name="van Montagu M."/>
            <person name="Rogers J."/>
            <person name="Cronin A."/>
            <person name="Quail M.A."/>
            <person name="Bray-Allen S."/>
            <person name="Clark L."/>
            <person name="Doggett J."/>
            <person name="Hall S."/>
            <person name="Kay M."/>
            <person name="Lennard N."/>
            <person name="McLay K."/>
            <person name="Mayes R."/>
            <person name="Pettett A."/>
            <person name="Rajandream M.A."/>
            <person name="Lyne M."/>
            <person name="Benes V."/>
            <person name="Rechmann S."/>
            <person name="Borkova D."/>
            <person name="Bloecker H."/>
            <person name="Scharfe M."/>
            <person name="Grimm M."/>
            <person name="Loehnert T.-H."/>
            <person name="Dose S."/>
            <person name="de Haan M."/>
            <person name="Maarse A.C."/>
            <person name="Schaefer M."/>
            <person name="Mueller-Auer S."/>
            <person name="Gabel C."/>
            <person name="Fuchs M."/>
            <person name="Fartmann B."/>
            <person name="Granderath K."/>
            <person name="Dauner D."/>
            <person name="Herzl A."/>
            <person name="Neumann S."/>
            <person name="Argiriou A."/>
            <person name="Vitale D."/>
            <person name="Liguori R."/>
            <person name="Piravandi E."/>
            <person name="Massenet O."/>
            <person name="Quigley F."/>
            <person name="Clabauld G."/>
            <person name="Muendlein A."/>
            <person name="Felber R."/>
            <person name="Schnabl S."/>
            <person name="Hiller R."/>
            <person name="Schmidt W."/>
            <person name="Lecharny A."/>
            <person name="Aubourg S."/>
            <person name="Chefdor F."/>
            <person name="Cooke R."/>
            <person name="Berger C."/>
            <person name="Monfort A."/>
            <person name="Casacuberta E."/>
            <person name="Gibbons T."/>
            <person name="Weber N."/>
            <person name="Vandenbol M."/>
            <person name="Bargues M."/>
            <person name="Terol J."/>
            <person name="Torres A."/>
            <person name="Perez-Perez A."/>
            <person name="Purnelle B."/>
            <person name="Bent E."/>
            <person name="Johnson S."/>
            <person name="Tacon D."/>
            <person name="Jesse T."/>
            <person name="Heijnen L."/>
            <person name="Schwarz S."/>
            <person name="Scholler P."/>
            <person name="Heber S."/>
            <person name="Francs P."/>
            <person name="Bielke C."/>
            <person name="Frishman D."/>
            <person name="Haase D."/>
            <person name="Lemcke K."/>
            <person name="Mewes H.-W."/>
            <person name="Stocker S."/>
            <person name="Zaccaria P."/>
            <person name="Bevan M."/>
            <person name="Wilson R.K."/>
            <person name="de la Bastide M."/>
            <person name="Habermann K."/>
            <person name="Parnell L."/>
            <person name="Dedhia N."/>
            <person name="Gnoj L."/>
            <person name="Schutz K."/>
            <person name="Huang E."/>
            <person name="Spiegel L."/>
            <person name="Sekhon M."/>
            <person name="Murray J."/>
            <person name="Sheet P."/>
            <person name="Cordes M."/>
            <person name="Abu-Threideh J."/>
            <person name="Stoneking T."/>
            <person name="Kalicki J."/>
            <person name="Graves T."/>
            <person name="Harmon G."/>
            <person name="Edwards J."/>
            <person name="Latreille P."/>
            <person name="Courtney L."/>
            <person name="Cloud J."/>
            <person name="Abbott A."/>
            <person name="Scott K."/>
            <person name="Johnson D."/>
            <person name="Minx P."/>
            <person name="Bentley D."/>
            <person name="Fulton B."/>
            <person name="Miller N."/>
            <person name="Greco T."/>
            <person name="Kemp K."/>
            <person name="Kramer J."/>
            <person name="Fulton L."/>
            <person name="Mardis E."/>
            <person name="Dante M."/>
            <person name="Pepin K."/>
            <person name="Hillier L.W."/>
            <person name="Nelson J."/>
            <person name="Spieth J."/>
            <person name="Ryan E."/>
            <person name="Andrews S."/>
            <person name="Geisel C."/>
            <person name="Layman D."/>
            <person name="Du H."/>
            <person name="Ali J."/>
            <person name="Berghoff A."/>
            <person name="Jones K."/>
            <person name="Drone K."/>
            <person name="Cotton M."/>
            <person name="Joshu C."/>
            <person name="Antonoiu B."/>
            <person name="Zidanic M."/>
            <person name="Strong C."/>
            <person name="Sun H."/>
            <person name="Lamar B."/>
            <person name="Yordan C."/>
            <person name="Ma P."/>
            <person name="Zhong J."/>
            <person name="Preston R."/>
            <person name="Vil D."/>
            <person name="Shekher M."/>
            <person name="Matero A."/>
            <person name="Shah R."/>
            <person name="Swaby I.K."/>
            <person name="O'Shaughnessy A."/>
            <person name="Rodriguez M."/>
            <person name="Hoffman J."/>
            <person name="Till S."/>
            <person name="Granat S."/>
            <person name="Shohdy N."/>
            <person name="Hasegawa A."/>
            <person name="Hameed A."/>
            <person name="Lodhi M."/>
            <person name="Johnson A."/>
            <person name="Chen E."/>
            <person name="Marra M.A."/>
            <person name="Martienssen R."/>
            <person name="McCombie W.R."/>
        </authorList>
    </citation>
    <scope>NUCLEOTIDE SEQUENCE [LARGE SCALE GENOMIC DNA]</scope>
    <source>
        <strain>cv. Columbia</strain>
    </source>
</reference>
<reference key="2">
    <citation type="journal article" date="2017" name="Plant J.">
        <title>Araport11: a complete reannotation of the Arabidopsis thaliana reference genome.</title>
        <authorList>
            <person name="Cheng C.Y."/>
            <person name="Krishnakumar V."/>
            <person name="Chan A.P."/>
            <person name="Thibaud-Nissen F."/>
            <person name="Schobel S."/>
            <person name="Town C.D."/>
        </authorList>
    </citation>
    <scope>GENOME REANNOTATION</scope>
    <source>
        <strain>cv. Columbia</strain>
    </source>
</reference>
<reference key="3">
    <citation type="journal article" date="2001" name="Plant Physiol.">
        <title>A superfamily of proteins with novel cysteine-rich repeats.</title>
        <authorList>
            <person name="Chen Z."/>
        </authorList>
    </citation>
    <scope>GENE FAMILY ORGANIZATION</scope>
    <scope>NOMENCLATURE</scope>
</reference>
<evidence type="ECO:0000250" key="1">
    <source>
        <dbReference type="UniProtKB" id="O48814"/>
    </source>
</evidence>
<evidence type="ECO:0000255" key="2"/>
<evidence type="ECO:0000255" key="3">
    <source>
        <dbReference type="PROSITE-ProRule" id="PRU00159"/>
    </source>
</evidence>
<evidence type="ECO:0000255" key="4">
    <source>
        <dbReference type="PROSITE-ProRule" id="PRU00806"/>
    </source>
</evidence>
<evidence type="ECO:0000255" key="5">
    <source>
        <dbReference type="PROSITE-ProRule" id="PRU10027"/>
    </source>
</evidence>
<evidence type="ECO:0000305" key="6"/>
<proteinExistence type="inferred from homology"/>
<keyword id="KW-0067">ATP-binding</keyword>
<keyword id="KW-0325">Glycoprotein</keyword>
<keyword id="KW-0418">Kinase</keyword>
<keyword id="KW-0472">Membrane</keyword>
<keyword id="KW-0547">Nucleotide-binding</keyword>
<keyword id="KW-0597">Phosphoprotein</keyword>
<keyword id="KW-0675">Receptor</keyword>
<keyword id="KW-1185">Reference proteome</keyword>
<keyword id="KW-0677">Repeat</keyword>
<keyword id="KW-0723">Serine/threonine-protein kinase</keyword>
<keyword id="KW-0732">Signal</keyword>
<keyword id="KW-0808">Transferase</keyword>
<keyword id="KW-0812">Transmembrane</keyword>
<keyword id="KW-1133">Transmembrane helix</keyword>
<protein>
    <recommendedName>
        <fullName>Putative cysteine-rich receptor-like protein kinase 33</fullName>
        <shortName>Cysteine-rich RLK33</shortName>
        <ecNumber>2.7.11.-</ecNumber>
    </recommendedName>
</protein>
<organism>
    <name type="scientific">Arabidopsis thaliana</name>
    <name type="common">Mouse-ear cress</name>
    <dbReference type="NCBI Taxonomy" id="3702"/>
    <lineage>
        <taxon>Eukaryota</taxon>
        <taxon>Viridiplantae</taxon>
        <taxon>Streptophyta</taxon>
        <taxon>Embryophyta</taxon>
        <taxon>Tracheophyta</taxon>
        <taxon>Spermatophyta</taxon>
        <taxon>Magnoliopsida</taxon>
        <taxon>eudicotyledons</taxon>
        <taxon>Gunneridae</taxon>
        <taxon>Pentapetalae</taxon>
        <taxon>rosids</taxon>
        <taxon>malvids</taxon>
        <taxon>Brassicales</taxon>
        <taxon>Brassicaceae</taxon>
        <taxon>Camelineae</taxon>
        <taxon>Arabidopsis</taxon>
    </lineage>
</organism>
<accession>Q9LDN1</accession>
<comment type="catalytic activity">
    <reaction>
        <text>L-seryl-[protein] + ATP = O-phospho-L-seryl-[protein] + ADP + H(+)</text>
        <dbReference type="Rhea" id="RHEA:17989"/>
        <dbReference type="Rhea" id="RHEA-COMP:9863"/>
        <dbReference type="Rhea" id="RHEA-COMP:11604"/>
        <dbReference type="ChEBI" id="CHEBI:15378"/>
        <dbReference type="ChEBI" id="CHEBI:29999"/>
        <dbReference type="ChEBI" id="CHEBI:30616"/>
        <dbReference type="ChEBI" id="CHEBI:83421"/>
        <dbReference type="ChEBI" id="CHEBI:456216"/>
    </reaction>
</comment>
<comment type="catalytic activity">
    <reaction>
        <text>L-threonyl-[protein] + ATP = O-phospho-L-threonyl-[protein] + ADP + H(+)</text>
        <dbReference type="Rhea" id="RHEA:46608"/>
        <dbReference type="Rhea" id="RHEA-COMP:11060"/>
        <dbReference type="Rhea" id="RHEA-COMP:11605"/>
        <dbReference type="ChEBI" id="CHEBI:15378"/>
        <dbReference type="ChEBI" id="CHEBI:30013"/>
        <dbReference type="ChEBI" id="CHEBI:30616"/>
        <dbReference type="ChEBI" id="CHEBI:61977"/>
        <dbReference type="ChEBI" id="CHEBI:456216"/>
    </reaction>
</comment>
<comment type="subcellular location">
    <subcellularLocation>
        <location evidence="6">Membrane</location>
        <topology evidence="6">Single-pass membrane protein</topology>
    </subcellularLocation>
</comment>
<comment type="similarity">
    <text evidence="3">Belongs to the protein kinase superfamily. Ser/Thr protein kinase family. CRK subfamily.</text>
</comment>